<gene>
    <name type="ORF">SPAC22A12.06c</name>
</gene>
<keyword id="KW-0963">Cytoplasm</keyword>
<keyword id="KW-0378">Hydrolase</keyword>
<keyword id="KW-0539">Nucleus</keyword>
<keyword id="KW-1185">Reference proteome</keyword>
<protein>
    <recommendedName>
        <fullName>Uncharacterized hydrolase C22A12.06c</fullName>
        <ecNumber>3.1.-.-</ecNumber>
    </recommendedName>
</protein>
<accession>O13897</accession>
<dbReference type="EC" id="3.1.-.-"/>
<dbReference type="EMBL" id="CU329670">
    <property type="protein sequence ID" value="CAB16576.1"/>
    <property type="molecule type" value="Genomic_DNA"/>
</dbReference>
<dbReference type="PIR" id="T38146">
    <property type="entry name" value="T38146"/>
</dbReference>
<dbReference type="SMR" id="O13897"/>
<dbReference type="BioGRID" id="277926">
    <property type="interactions" value="2"/>
</dbReference>
<dbReference type="FunCoup" id="O13897">
    <property type="interactions" value="231"/>
</dbReference>
<dbReference type="ESTHER" id="schpo-C22A12.06C">
    <property type="family name" value="FSH1"/>
</dbReference>
<dbReference type="iPTMnet" id="O13897"/>
<dbReference type="PaxDb" id="4896-SPAC22A12.06c.1"/>
<dbReference type="EnsemblFungi" id="SPAC22A12.06c.1">
    <property type="protein sequence ID" value="SPAC22A12.06c.1:pep"/>
    <property type="gene ID" value="SPAC22A12.06c"/>
</dbReference>
<dbReference type="KEGG" id="spo:2541420"/>
<dbReference type="PomBase" id="SPAC22A12.06c"/>
<dbReference type="VEuPathDB" id="FungiDB:SPAC22A12.06c"/>
<dbReference type="eggNOG" id="KOG2551">
    <property type="taxonomic scope" value="Eukaryota"/>
</dbReference>
<dbReference type="HOGENOM" id="CLU_627245_0_0_1"/>
<dbReference type="InParanoid" id="O13897"/>
<dbReference type="OMA" id="SSQIRQW"/>
<dbReference type="PhylomeDB" id="O13897"/>
<dbReference type="PRO" id="PR:O13897"/>
<dbReference type="Proteomes" id="UP000002485">
    <property type="component" value="Chromosome I"/>
</dbReference>
<dbReference type="GO" id="GO:0032153">
    <property type="term" value="C:cell division site"/>
    <property type="evidence" value="ECO:0007005"/>
    <property type="project" value="PomBase"/>
</dbReference>
<dbReference type="GO" id="GO:0051286">
    <property type="term" value="C:cell tip"/>
    <property type="evidence" value="ECO:0007005"/>
    <property type="project" value="PomBase"/>
</dbReference>
<dbReference type="GO" id="GO:0005737">
    <property type="term" value="C:cytoplasm"/>
    <property type="evidence" value="ECO:0000318"/>
    <property type="project" value="GO_Central"/>
</dbReference>
<dbReference type="GO" id="GO:0005829">
    <property type="term" value="C:cytosol"/>
    <property type="evidence" value="ECO:0007005"/>
    <property type="project" value="PomBase"/>
</dbReference>
<dbReference type="GO" id="GO:0005634">
    <property type="term" value="C:nucleus"/>
    <property type="evidence" value="ECO:0007005"/>
    <property type="project" value="PomBase"/>
</dbReference>
<dbReference type="GO" id="GO:0016787">
    <property type="term" value="F:hydrolase activity"/>
    <property type="evidence" value="ECO:0000318"/>
    <property type="project" value="GO_Central"/>
</dbReference>
<dbReference type="GO" id="GO:0017171">
    <property type="term" value="F:serine hydrolase activity"/>
    <property type="evidence" value="ECO:0000255"/>
    <property type="project" value="PomBase"/>
</dbReference>
<dbReference type="Gene3D" id="3.40.50.1820">
    <property type="entry name" value="alpha/beta hydrolase"/>
    <property type="match status" value="1"/>
</dbReference>
<dbReference type="Gene3D" id="3.40.430.10">
    <property type="entry name" value="Dihydrofolate Reductase, subunit A"/>
    <property type="match status" value="1"/>
</dbReference>
<dbReference type="InterPro" id="IPR029058">
    <property type="entry name" value="AB_hydrolase_fold"/>
</dbReference>
<dbReference type="InterPro" id="IPR024072">
    <property type="entry name" value="DHFR-like_dom_sf"/>
</dbReference>
<dbReference type="InterPro" id="IPR005645">
    <property type="entry name" value="FSH-like_dom"/>
</dbReference>
<dbReference type="InterPro" id="IPR050593">
    <property type="entry name" value="LovG"/>
</dbReference>
<dbReference type="PANTHER" id="PTHR48070">
    <property type="entry name" value="ESTERASE OVCA2"/>
    <property type="match status" value="1"/>
</dbReference>
<dbReference type="PANTHER" id="PTHR48070:SF6">
    <property type="entry name" value="ESTERASE OVCA2"/>
    <property type="match status" value="1"/>
</dbReference>
<dbReference type="Pfam" id="PF03959">
    <property type="entry name" value="FSH1"/>
    <property type="match status" value="1"/>
</dbReference>
<dbReference type="SUPFAM" id="SSF53474">
    <property type="entry name" value="alpha/beta-Hydrolases"/>
    <property type="match status" value="1"/>
</dbReference>
<evidence type="ECO:0000250" key="1"/>
<evidence type="ECO:0000269" key="2">
    <source>
    </source>
</evidence>
<evidence type="ECO:0000305" key="3"/>
<comment type="subcellular location">
    <subcellularLocation>
        <location evidence="2">Cytoplasm</location>
    </subcellularLocation>
    <subcellularLocation>
        <location evidence="2">Nucleus</location>
    </subcellularLocation>
    <text>Localizes at the barrier septum and cell tip.</text>
</comment>
<comment type="similarity">
    <text evidence="3">Belongs to the AB hydrolase 3 family.</text>
</comment>
<sequence>MKSATKSKILCIHGYAESGELFSVKLRALRERMADSVDFYFPTGPIELDKAKDELNGSGFDALSTVFSSSPASHRRGWWRINEYADTKQLEPTKAFEYLASYIKEHGPFDGILGFSQGTNLAANLAALVTIPKYQEYFSQPPFRFALFFSGYFRPLLMDGAVHATKLDLPTLHLLGKYDTVLSTETSTTLVRACKDAQVLFHPAAHQIPAPHAYVEPAADFIDFFSREDWPIISKHISLIVPTKKVNTTSAQTSLNNVEHDLISKIMSRSFKGGINVVVSDLQMFNEYKRIFGPKVLSLVVTDGQEPDTYSENVHYTPNFKGALAYLEAYQNSIGRIYVIGDKKLLTLGMLCRCTKRIIAITDAEDKFISQSSAQQVSGSLPFLEHSKEWLKAKSSQIRQWTGQSRLKHMSQDNSGEPVTMKLQMWERL</sequence>
<feature type="chain" id="PRO_0000316196" description="Uncharacterized hydrolase C22A12.06c">
    <location>
        <begin position="1"/>
        <end position="429"/>
    </location>
</feature>
<feature type="active site" description="Charge relay system" evidence="1">
    <location>
        <position position="116"/>
    </location>
</feature>
<feature type="active site" description="Charge relay system" evidence="1">
    <location>
        <position position="179"/>
    </location>
</feature>
<feature type="active site" description="Charge relay system" evidence="1">
    <location>
        <position position="206"/>
    </location>
</feature>
<reference key="1">
    <citation type="journal article" date="2002" name="Nature">
        <title>The genome sequence of Schizosaccharomyces pombe.</title>
        <authorList>
            <person name="Wood V."/>
            <person name="Gwilliam R."/>
            <person name="Rajandream M.A."/>
            <person name="Lyne M.H."/>
            <person name="Lyne R."/>
            <person name="Stewart A."/>
            <person name="Sgouros J.G."/>
            <person name="Peat N."/>
            <person name="Hayles J."/>
            <person name="Baker S.G."/>
            <person name="Basham D."/>
            <person name="Bowman S."/>
            <person name="Brooks K."/>
            <person name="Brown D."/>
            <person name="Brown S."/>
            <person name="Chillingworth T."/>
            <person name="Churcher C.M."/>
            <person name="Collins M."/>
            <person name="Connor R."/>
            <person name="Cronin A."/>
            <person name="Davis P."/>
            <person name="Feltwell T."/>
            <person name="Fraser A."/>
            <person name="Gentles S."/>
            <person name="Goble A."/>
            <person name="Hamlin N."/>
            <person name="Harris D.E."/>
            <person name="Hidalgo J."/>
            <person name="Hodgson G."/>
            <person name="Holroyd S."/>
            <person name="Hornsby T."/>
            <person name="Howarth S."/>
            <person name="Huckle E.J."/>
            <person name="Hunt S."/>
            <person name="Jagels K."/>
            <person name="James K.D."/>
            <person name="Jones L."/>
            <person name="Jones M."/>
            <person name="Leather S."/>
            <person name="McDonald S."/>
            <person name="McLean J."/>
            <person name="Mooney P."/>
            <person name="Moule S."/>
            <person name="Mungall K.L."/>
            <person name="Murphy L.D."/>
            <person name="Niblett D."/>
            <person name="Odell C."/>
            <person name="Oliver K."/>
            <person name="O'Neil S."/>
            <person name="Pearson D."/>
            <person name="Quail M.A."/>
            <person name="Rabbinowitsch E."/>
            <person name="Rutherford K.M."/>
            <person name="Rutter S."/>
            <person name="Saunders D."/>
            <person name="Seeger K."/>
            <person name="Sharp S."/>
            <person name="Skelton J."/>
            <person name="Simmonds M.N."/>
            <person name="Squares R."/>
            <person name="Squares S."/>
            <person name="Stevens K."/>
            <person name="Taylor K."/>
            <person name="Taylor R.G."/>
            <person name="Tivey A."/>
            <person name="Walsh S.V."/>
            <person name="Warren T."/>
            <person name="Whitehead S."/>
            <person name="Woodward J.R."/>
            <person name="Volckaert G."/>
            <person name="Aert R."/>
            <person name="Robben J."/>
            <person name="Grymonprez B."/>
            <person name="Weltjens I."/>
            <person name="Vanstreels E."/>
            <person name="Rieger M."/>
            <person name="Schaefer M."/>
            <person name="Mueller-Auer S."/>
            <person name="Gabel C."/>
            <person name="Fuchs M."/>
            <person name="Duesterhoeft A."/>
            <person name="Fritzc C."/>
            <person name="Holzer E."/>
            <person name="Moestl D."/>
            <person name="Hilbert H."/>
            <person name="Borzym K."/>
            <person name="Langer I."/>
            <person name="Beck A."/>
            <person name="Lehrach H."/>
            <person name="Reinhardt R."/>
            <person name="Pohl T.M."/>
            <person name="Eger P."/>
            <person name="Zimmermann W."/>
            <person name="Wedler H."/>
            <person name="Wambutt R."/>
            <person name="Purnelle B."/>
            <person name="Goffeau A."/>
            <person name="Cadieu E."/>
            <person name="Dreano S."/>
            <person name="Gloux S."/>
            <person name="Lelaure V."/>
            <person name="Mottier S."/>
            <person name="Galibert F."/>
            <person name="Aves S.J."/>
            <person name="Xiang Z."/>
            <person name="Hunt C."/>
            <person name="Moore K."/>
            <person name="Hurst S.M."/>
            <person name="Lucas M."/>
            <person name="Rochet M."/>
            <person name="Gaillardin C."/>
            <person name="Tallada V.A."/>
            <person name="Garzon A."/>
            <person name="Thode G."/>
            <person name="Daga R.R."/>
            <person name="Cruzado L."/>
            <person name="Jimenez J."/>
            <person name="Sanchez M."/>
            <person name="del Rey F."/>
            <person name="Benito J."/>
            <person name="Dominguez A."/>
            <person name="Revuelta J.L."/>
            <person name="Moreno S."/>
            <person name="Armstrong J."/>
            <person name="Forsburg S.L."/>
            <person name="Cerutti L."/>
            <person name="Lowe T."/>
            <person name="McCombie W.R."/>
            <person name="Paulsen I."/>
            <person name="Potashkin J."/>
            <person name="Shpakovski G.V."/>
            <person name="Ussery D."/>
            <person name="Barrell B.G."/>
            <person name="Nurse P."/>
        </authorList>
    </citation>
    <scope>NUCLEOTIDE SEQUENCE [LARGE SCALE GENOMIC DNA]</scope>
    <source>
        <strain>972 / ATCC 24843</strain>
    </source>
</reference>
<reference key="2">
    <citation type="journal article" date="2006" name="Nat. Biotechnol.">
        <title>ORFeome cloning and global analysis of protein localization in the fission yeast Schizosaccharomyces pombe.</title>
        <authorList>
            <person name="Matsuyama A."/>
            <person name="Arai R."/>
            <person name="Yashiroda Y."/>
            <person name="Shirai A."/>
            <person name="Kamata A."/>
            <person name="Sekido S."/>
            <person name="Kobayashi Y."/>
            <person name="Hashimoto A."/>
            <person name="Hamamoto M."/>
            <person name="Hiraoka Y."/>
            <person name="Horinouchi S."/>
            <person name="Yoshida M."/>
        </authorList>
    </citation>
    <scope>SUBCELLULAR LOCATION [LARGE SCALE ANALYSIS]</scope>
</reference>
<proteinExistence type="inferred from homology"/>
<name>YF36_SCHPO</name>
<organism>
    <name type="scientific">Schizosaccharomyces pombe (strain 972 / ATCC 24843)</name>
    <name type="common">Fission yeast</name>
    <dbReference type="NCBI Taxonomy" id="284812"/>
    <lineage>
        <taxon>Eukaryota</taxon>
        <taxon>Fungi</taxon>
        <taxon>Dikarya</taxon>
        <taxon>Ascomycota</taxon>
        <taxon>Taphrinomycotina</taxon>
        <taxon>Schizosaccharomycetes</taxon>
        <taxon>Schizosaccharomycetales</taxon>
        <taxon>Schizosaccharomycetaceae</taxon>
        <taxon>Schizosaccharomyces</taxon>
    </lineage>
</organism>